<organism>
    <name type="scientific">Flavobacterium johnsoniae (strain ATCC 17061 / DSM 2064 / JCM 8514 / BCRC 14874 / CCUG 350202 / NBRC 14942 / NCIMB 11054 / UW101)</name>
    <name type="common">Cytophaga johnsonae</name>
    <dbReference type="NCBI Taxonomy" id="376686"/>
    <lineage>
        <taxon>Bacteria</taxon>
        <taxon>Pseudomonadati</taxon>
        <taxon>Bacteroidota</taxon>
        <taxon>Flavobacteriia</taxon>
        <taxon>Flavobacteriales</taxon>
        <taxon>Flavobacteriaceae</taxon>
        <taxon>Flavobacterium</taxon>
    </lineage>
</organism>
<feature type="chain" id="PRO_0000350177" description="Probable dual-specificity RNA methyltransferase RlmN">
    <location>
        <begin position="1"/>
        <end position="349"/>
    </location>
</feature>
<feature type="domain" description="Radical SAM core" evidence="2">
    <location>
        <begin position="100"/>
        <end position="334"/>
    </location>
</feature>
<feature type="active site" description="Proton acceptor" evidence="1">
    <location>
        <position position="94"/>
    </location>
</feature>
<feature type="active site" description="S-methylcysteine intermediate" evidence="1">
    <location>
        <position position="339"/>
    </location>
</feature>
<feature type="binding site" evidence="1">
    <location>
        <position position="114"/>
    </location>
    <ligand>
        <name>[4Fe-4S] cluster</name>
        <dbReference type="ChEBI" id="CHEBI:49883"/>
        <note>4Fe-4S-S-AdoMet</note>
    </ligand>
</feature>
<feature type="binding site" evidence="1">
    <location>
        <position position="118"/>
    </location>
    <ligand>
        <name>[4Fe-4S] cluster</name>
        <dbReference type="ChEBI" id="CHEBI:49883"/>
        <note>4Fe-4S-S-AdoMet</note>
    </ligand>
</feature>
<feature type="binding site" evidence="1">
    <location>
        <position position="121"/>
    </location>
    <ligand>
        <name>[4Fe-4S] cluster</name>
        <dbReference type="ChEBI" id="CHEBI:49883"/>
        <note>4Fe-4S-S-AdoMet</note>
    </ligand>
</feature>
<feature type="binding site" evidence="1">
    <location>
        <begin position="165"/>
        <end position="166"/>
    </location>
    <ligand>
        <name>S-adenosyl-L-methionine</name>
        <dbReference type="ChEBI" id="CHEBI:59789"/>
    </ligand>
</feature>
<feature type="binding site" evidence="1">
    <location>
        <position position="197"/>
    </location>
    <ligand>
        <name>S-adenosyl-L-methionine</name>
        <dbReference type="ChEBI" id="CHEBI:59789"/>
    </ligand>
</feature>
<feature type="binding site" evidence="1">
    <location>
        <begin position="220"/>
        <end position="222"/>
    </location>
    <ligand>
        <name>S-adenosyl-L-methionine</name>
        <dbReference type="ChEBI" id="CHEBI:59789"/>
    </ligand>
</feature>
<feature type="binding site" evidence="1">
    <location>
        <position position="296"/>
    </location>
    <ligand>
        <name>S-adenosyl-L-methionine</name>
        <dbReference type="ChEBI" id="CHEBI:59789"/>
    </ligand>
</feature>
<feature type="disulfide bond" description="(transient)" evidence="1">
    <location>
        <begin position="107"/>
        <end position="339"/>
    </location>
</feature>
<comment type="function">
    <text evidence="1">Specifically methylates position 2 of adenine 2503 in 23S rRNA and position 2 of adenine 37 in tRNAs.</text>
</comment>
<comment type="catalytic activity">
    <reaction evidence="1">
        <text>adenosine(2503) in 23S rRNA + 2 reduced [2Fe-2S]-[ferredoxin] + 2 S-adenosyl-L-methionine = 2-methyladenosine(2503) in 23S rRNA + 5'-deoxyadenosine + L-methionine + 2 oxidized [2Fe-2S]-[ferredoxin] + S-adenosyl-L-homocysteine</text>
        <dbReference type="Rhea" id="RHEA:42916"/>
        <dbReference type="Rhea" id="RHEA-COMP:10000"/>
        <dbReference type="Rhea" id="RHEA-COMP:10001"/>
        <dbReference type="Rhea" id="RHEA-COMP:10152"/>
        <dbReference type="Rhea" id="RHEA-COMP:10282"/>
        <dbReference type="ChEBI" id="CHEBI:17319"/>
        <dbReference type="ChEBI" id="CHEBI:33737"/>
        <dbReference type="ChEBI" id="CHEBI:33738"/>
        <dbReference type="ChEBI" id="CHEBI:57844"/>
        <dbReference type="ChEBI" id="CHEBI:57856"/>
        <dbReference type="ChEBI" id="CHEBI:59789"/>
        <dbReference type="ChEBI" id="CHEBI:74411"/>
        <dbReference type="ChEBI" id="CHEBI:74497"/>
        <dbReference type="EC" id="2.1.1.192"/>
    </reaction>
</comment>
<comment type="catalytic activity">
    <reaction evidence="1">
        <text>adenosine(37) in tRNA + 2 reduced [2Fe-2S]-[ferredoxin] + 2 S-adenosyl-L-methionine = 2-methyladenosine(37) in tRNA + 5'-deoxyadenosine + L-methionine + 2 oxidized [2Fe-2S]-[ferredoxin] + S-adenosyl-L-homocysteine</text>
        <dbReference type="Rhea" id="RHEA:43332"/>
        <dbReference type="Rhea" id="RHEA-COMP:10000"/>
        <dbReference type="Rhea" id="RHEA-COMP:10001"/>
        <dbReference type="Rhea" id="RHEA-COMP:10162"/>
        <dbReference type="Rhea" id="RHEA-COMP:10485"/>
        <dbReference type="ChEBI" id="CHEBI:17319"/>
        <dbReference type="ChEBI" id="CHEBI:33737"/>
        <dbReference type="ChEBI" id="CHEBI:33738"/>
        <dbReference type="ChEBI" id="CHEBI:57844"/>
        <dbReference type="ChEBI" id="CHEBI:57856"/>
        <dbReference type="ChEBI" id="CHEBI:59789"/>
        <dbReference type="ChEBI" id="CHEBI:74411"/>
        <dbReference type="ChEBI" id="CHEBI:74497"/>
        <dbReference type="EC" id="2.1.1.192"/>
    </reaction>
</comment>
<comment type="cofactor">
    <cofactor evidence="1">
        <name>[4Fe-4S] cluster</name>
        <dbReference type="ChEBI" id="CHEBI:49883"/>
    </cofactor>
    <text evidence="1">Binds 1 [4Fe-4S] cluster. The cluster is coordinated with 3 cysteines and an exchangeable S-adenosyl-L-methionine.</text>
</comment>
<comment type="subcellular location">
    <subcellularLocation>
        <location evidence="1">Cytoplasm</location>
    </subcellularLocation>
</comment>
<comment type="miscellaneous">
    <text evidence="1">Reaction proceeds by a ping-pong mechanism involving intermediate methylation of a conserved cysteine residue.</text>
</comment>
<comment type="similarity">
    <text evidence="1">Belongs to the radical SAM superfamily. RlmN family.</text>
</comment>
<gene>
    <name evidence="1" type="primary">rlmN</name>
    <name type="ordered locus">Fjoh_1782</name>
</gene>
<name>RLMN_FLAJ1</name>
<proteinExistence type="inferred from homology"/>
<reference key="1">
    <citation type="journal article" date="2009" name="Appl. Environ. Microbiol.">
        <title>Novel features of the polysaccharide-digesting gliding bacterium Flavobacterium johnsoniae as revealed by genome sequence analysis.</title>
        <authorList>
            <person name="McBride M.J."/>
            <person name="Xie G."/>
            <person name="Martens E.C."/>
            <person name="Lapidus A."/>
            <person name="Henrissat B."/>
            <person name="Rhodes R.G."/>
            <person name="Goltsman E."/>
            <person name="Wang W."/>
            <person name="Xu J."/>
            <person name="Hunnicutt D.W."/>
            <person name="Staroscik A.M."/>
            <person name="Hoover T.R."/>
            <person name="Cheng Y.Q."/>
            <person name="Stein J.L."/>
        </authorList>
    </citation>
    <scope>NUCLEOTIDE SEQUENCE [LARGE SCALE GENOMIC DNA]</scope>
    <source>
        <strain>ATCC 17061 / DSM 2064 / JCM 8514 / BCRC 14874 / CCUG 350202 / NBRC 14942 / NCIMB 11054 / UW101</strain>
    </source>
</reference>
<accession>A5FJ06</accession>
<evidence type="ECO:0000255" key="1">
    <source>
        <dbReference type="HAMAP-Rule" id="MF_01849"/>
    </source>
</evidence>
<evidence type="ECO:0000255" key="2">
    <source>
        <dbReference type="PROSITE-ProRule" id="PRU01266"/>
    </source>
</evidence>
<dbReference type="EC" id="2.1.1.192" evidence="1"/>
<dbReference type="EMBL" id="CP000685">
    <property type="protein sequence ID" value="ABQ04814.1"/>
    <property type="molecule type" value="Genomic_DNA"/>
</dbReference>
<dbReference type="RefSeq" id="WP_012023858.1">
    <property type="nucleotide sequence ID" value="NC_009441.1"/>
</dbReference>
<dbReference type="SMR" id="A5FJ06"/>
<dbReference type="STRING" id="376686.Fjoh_1782"/>
<dbReference type="KEGG" id="fjo:Fjoh_1782"/>
<dbReference type="eggNOG" id="COG0820">
    <property type="taxonomic scope" value="Bacteria"/>
</dbReference>
<dbReference type="HOGENOM" id="CLU_029101_0_0_10"/>
<dbReference type="OrthoDB" id="9793973at2"/>
<dbReference type="Proteomes" id="UP000006694">
    <property type="component" value="Chromosome"/>
</dbReference>
<dbReference type="GO" id="GO:0005737">
    <property type="term" value="C:cytoplasm"/>
    <property type="evidence" value="ECO:0007669"/>
    <property type="project" value="UniProtKB-SubCell"/>
</dbReference>
<dbReference type="GO" id="GO:0051539">
    <property type="term" value="F:4 iron, 4 sulfur cluster binding"/>
    <property type="evidence" value="ECO:0007669"/>
    <property type="project" value="UniProtKB-UniRule"/>
</dbReference>
<dbReference type="GO" id="GO:0046872">
    <property type="term" value="F:metal ion binding"/>
    <property type="evidence" value="ECO:0007669"/>
    <property type="project" value="UniProtKB-KW"/>
</dbReference>
<dbReference type="GO" id="GO:0070040">
    <property type="term" value="F:rRNA (adenine(2503)-C2-)-methyltransferase activity"/>
    <property type="evidence" value="ECO:0007669"/>
    <property type="project" value="UniProtKB-UniRule"/>
</dbReference>
<dbReference type="GO" id="GO:0019843">
    <property type="term" value="F:rRNA binding"/>
    <property type="evidence" value="ECO:0007669"/>
    <property type="project" value="UniProtKB-UniRule"/>
</dbReference>
<dbReference type="GO" id="GO:0002935">
    <property type="term" value="F:tRNA (adenine(37)-C2)-methyltransferase activity"/>
    <property type="evidence" value="ECO:0007669"/>
    <property type="project" value="UniProtKB-UniRule"/>
</dbReference>
<dbReference type="GO" id="GO:0000049">
    <property type="term" value="F:tRNA binding"/>
    <property type="evidence" value="ECO:0007669"/>
    <property type="project" value="UniProtKB-UniRule"/>
</dbReference>
<dbReference type="GO" id="GO:0070475">
    <property type="term" value="P:rRNA base methylation"/>
    <property type="evidence" value="ECO:0007669"/>
    <property type="project" value="UniProtKB-UniRule"/>
</dbReference>
<dbReference type="GO" id="GO:0030488">
    <property type="term" value="P:tRNA methylation"/>
    <property type="evidence" value="ECO:0007669"/>
    <property type="project" value="UniProtKB-UniRule"/>
</dbReference>
<dbReference type="CDD" id="cd01335">
    <property type="entry name" value="Radical_SAM"/>
    <property type="match status" value="1"/>
</dbReference>
<dbReference type="FunFam" id="3.20.20.70:FF:000014">
    <property type="entry name" value="Probable dual-specificity RNA methyltransferase RlmN"/>
    <property type="match status" value="1"/>
</dbReference>
<dbReference type="Gene3D" id="1.10.150.530">
    <property type="match status" value="1"/>
</dbReference>
<dbReference type="Gene3D" id="3.20.20.70">
    <property type="entry name" value="Aldolase class I"/>
    <property type="match status" value="1"/>
</dbReference>
<dbReference type="HAMAP" id="MF_01849">
    <property type="entry name" value="RNA_methyltr_RlmN"/>
    <property type="match status" value="1"/>
</dbReference>
<dbReference type="InterPro" id="IPR013785">
    <property type="entry name" value="Aldolase_TIM"/>
</dbReference>
<dbReference type="InterPro" id="IPR040072">
    <property type="entry name" value="Methyltransferase_A"/>
</dbReference>
<dbReference type="InterPro" id="IPR048641">
    <property type="entry name" value="RlmN_N"/>
</dbReference>
<dbReference type="InterPro" id="IPR027492">
    <property type="entry name" value="RNA_MTrfase_RlmN"/>
</dbReference>
<dbReference type="InterPro" id="IPR004383">
    <property type="entry name" value="rRNA_lsu_MTrfase_RlmN/Cfr"/>
</dbReference>
<dbReference type="InterPro" id="IPR007197">
    <property type="entry name" value="rSAM"/>
</dbReference>
<dbReference type="NCBIfam" id="TIGR00048">
    <property type="entry name" value="rRNA_mod_RlmN"/>
    <property type="match status" value="1"/>
</dbReference>
<dbReference type="PANTHER" id="PTHR30544">
    <property type="entry name" value="23S RRNA METHYLTRANSFERASE"/>
    <property type="match status" value="1"/>
</dbReference>
<dbReference type="PANTHER" id="PTHR30544:SF5">
    <property type="entry name" value="RADICAL SAM CORE DOMAIN-CONTAINING PROTEIN"/>
    <property type="match status" value="1"/>
</dbReference>
<dbReference type="Pfam" id="PF04055">
    <property type="entry name" value="Radical_SAM"/>
    <property type="match status" value="1"/>
</dbReference>
<dbReference type="Pfam" id="PF21016">
    <property type="entry name" value="RlmN_N"/>
    <property type="match status" value="1"/>
</dbReference>
<dbReference type="PIRSF" id="PIRSF006004">
    <property type="entry name" value="CHP00048"/>
    <property type="match status" value="1"/>
</dbReference>
<dbReference type="SFLD" id="SFLDF00275">
    <property type="entry name" value="adenosine_C2_methyltransferase"/>
    <property type="match status" value="1"/>
</dbReference>
<dbReference type="SFLD" id="SFLDS00029">
    <property type="entry name" value="Radical_SAM"/>
    <property type="match status" value="1"/>
</dbReference>
<dbReference type="SUPFAM" id="SSF102114">
    <property type="entry name" value="Radical SAM enzymes"/>
    <property type="match status" value="1"/>
</dbReference>
<dbReference type="PROSITE" id="PS51918">
    <property type="entry name" value="RADICAL_SAM"/>
    <property type="match status" value="1"/>
</dbReference>
<keyword id="KW-0004">4Fe-4S</keyword>
<keyword id="KW-0963">Cytoplasm</keyword>
<keyword id="KW-1015">Disulfide bond</keyword>
<keyword id="KW-0408">Iron</keyword>
<keyword id="KW-0411">Iron-sulfur</keyword>
<keyword id="KW-0479">Metal-binding</keyword>
<keyword id="KW-0489">Methyltransferase</keyword>
<keyword id="KW-0698">rRNA processing</keyword>
<keyword id="KW-0949">S-adenosyl-L-methionine</keyword>
<keyword id="KW-0808">Transferase</keyword>
<keyword id="KW-0819">tRNA processing</keyword>
<sequence>MQIEKKDIRALSKDQLRDFFVANNDKAFRGNQVYEWLWSKGAHSFEDMTNVAKTTRSMLEENFVINHIKVDTMQRSNDGTVKNAVRLHDGLVVESVLIPTETRTTACVSSQVGCSLDCNFCATARLKRMRNLEPGEIYDQIMAIDKESRLYHNHPLSNIVFMGMGEPLMNYNNVIKAIDMVTSEEGLGMSPKRITLSTSGIPKMIKKMADDDVKFRLAVSLHSAIDETRAKIMPFSKNFPLKDLREALEYWYRKTKSKVSYEYVVWKGINDDKASVDALVKFCKYVPCKVNLIEYNPIDDGEFQQASEESILAYIKALENIGVVVKVRRSRGKDIDAACGQLANKEAEV</sequence>
<protein>
    <recommendedName>
        <fullName evidence="1">Probable dual-specificity RNA methyltransferase RlmN</fullName>
        <ecNumber evidence="1">2.1.1.192</ecNumber>
    </recommendedName>
    <alternativeName>
        <fullName evidence="1">23S rRNA (adenine(2503)-C(2))-methyltransferase</fullName>
    </alternativeName>
    <alternativeName>
        <fullName evidence="1">23S rRNA m2A2503 methyltransferase</fullName>
    </alternativeName>
    <alternativeName>
        <fullName evidence="1">Ribosomal RNA large subunit methyltransferase N</fullName>
    </alternativeName>
    <alternativeName>
        <fullName evidence="1">tRNA (adenine(37)-C(2))-methyltransferase</fullName>
    </alternativeName>
    <alternativeName>
        <fullName evidence="1">tRNA m2A37 methyltransferase</fullName>
    </alternativeName>
</protein>